<reference key="1">
    <citation type="journal article" date="2004" name="Nucleic Acids Res.">
        <title>Thermoadaptation trait revealed by the genome sequence of thermophilic Geobacillus kaustophilus.</title>
        <authorList>
            <person name="Takami H."/>
            <person name="Takaki Y."/>
            <person name="Chee G.-J."/>
            <person name="Nishi S."/>
            <person name="Shimamura S."/>
            <person name="Suzuki H."/>
            <person name="Matsui S."/>
            <person name="Uchiyama I."/>
        </authorList>
    </citation>
    <scope>NUCLEOTIDE SEQUENCE [LARGE SCALE GENOMIC DNA]</scope>
    <source>
        <strain>HTA426</strain>
    </source>
</reference>
<protein>
    <recommendedName>
        <fullName>Flagellar protein FliT</fullName>
    </recommendedName>
</protein>
<keyword id="KW-1005">Bacterial flagellum biogenesis</keyword>
<keyword id="KW-0143">Chaperone</keyword>
<keyword id="KW-0963">Cytoplasm</keyword>
<keyword id="KW-1185">Reference proteome</keyword>
<organism>
    <name type="scientific">Geobacillus kaustophilus (strain HTA426)</name>
    <dbReference type="NCBI Taxonomy" id="235909"/>
    <lineage>
        <taxon>Bacteria</taxon>
        <taxon>Bacillati</taxon>
        <taxon>Bacillota</taxon>
        <taxon>Bacilli</taxon>
        <taxon>Bacillales</taxon>
        <taxon>Anoxybacillaceae</taxon>
        <taxon>Geobacillus</taxon>
        <taxon>Geobacillus thermoleovorans group</taxon>
    </lineage>
</organism>
<evidence type="ECO:0000250" key="1"/>
<evidence type="ECO:0000305" key="2"/>
<gene>
    <name type="primary">fliT</name>
    <name type="ordered locus">GK3112</name>
</gene>
<sequence length="117" mass="14076">MGVVHDVWLVTKELLEATALPWPSEEREERLAAVDRLLLEREELLRKLRPPYSEEEQELGREIIVWNQEIEARLLRVCEEIRRDLRMTGAKRQANARYVHPYEQPLSFDGMFYDKRR</sequence>
<comment type="function">
    <text evidence="1">May act as an export chaperone for the filament capping protein FliD.</text>
</comment>
<comment type="subunit">
    <text evidence="1">Homodimer.</text>
</comment>
<comment type="subcellular location">
    <subcellularLocation>
        <location evidence="1">Cytoplasm</location>
        <location evidence="1">Cytosol</location>
    </subcellularLocation>
</comment>
<comment type="similarity">
    <text evidence="2">Belongs to the bacillales FliT family.</text>
</comment>
<accession>Q5KV89</accession>
<name>FLIT_GEOKA</name>
<dbReference type="EMBL" id="BA000043">
    <property type="protein sequence ID" value="BAD77397.1"/>
    <property type="molecule type" value="Genomic_DNA"/>
</dbReference>
<dbReference type="RefSeq" id="WP_011232582.1">
    <property type="nucleotide sequence ID" value="NC_006510.1"/>
</dbReference>
<dbReference type="SMR" id="Q5KV89"/>
<dbReference type="STRING" id="235909.GK3112"/>
<dbReference type="KEGG" id="gka:GK3112"/>
<dbReference type="PATRIC" id="fig|235909.7.peg.3322"/>
<dbReference type="eggNOG" id="ENOG50330XF">
    <property type="taxonomic scope" value="Bacteria"/>
</dbReference>
<dbReference type="HOGENOM" id="CLU_165941_1_0_9"/>
<dbReference type="Proteomes" id="UP000001172">
    <property type="component" value="Chromosome"/>
</dbReference>
<dbReference type="GO" id="GO:0005829">
    <property type="term" value="C:cytosol"/>
    <property type="evidence" value="ECO:0007669"/>
    <property type="project" value="UniProtKB-SubCell"/>
</dbReference>
<dbReference type="GO" id="GO:0044781">
    <property type="term" value="P:bacterial-type flagellum organization"/>
    <property type="evidence" value="ECO:0007669"/>
    <property type="project" value="UniProtKB-KW"/>
</dbReference>
<feature type="chain" id="PRO_0000353909" description="Flagellar protein FliT">
    <location>
        <begin position="1"/>
        <end position="117"/>
    </location>
</feature>
<proteinExistence type="inferred from homology"/>